<organism>
    <name type="scientific">Pseudomonas fluorescens (strain ATCC BAA-477 / NRRL B-23932 / Pf-5)</name>
    <dbReference type="NCBI Taxonomy" id="220664"/>
    <lineage>
        <taxon>Bacteria</taxon>
        <taxon>Pseudomonadati</taxon>
        <taxon>Pseudomonadota</taxon>
        <taxon>Gammaproteobacteria</taxon>
        <taxon>Pseudomonadales</taxon>
        <taxon>Pseudomonadaceae</taxon>
        <taxon>Pseudomonas</taxon>
    </lineage>
</organism>
<reference key="1">
    <citation type="journal article" date="2005" name="Nat. Biotechnol.">
        <title>Complete genome sequence of the plant commensal Pseudomonas fluorescens Pf-5.</title>
        <authorList>
            <person name="Paulsen I.T."/>
            <person name="Press C.M."/>
            <person name="Ravel J."/>
            <person name="Kobayashi D.Y."/>
            <person name="Myers G.S.A."/>
            <person name="Mavrodi D.V."/>
            <person name="DeBoy R.T."/>
            <person name="Seshadri R."/>
            <person name="Ren Q."/>
            <person name="Madupu R."/>
            <person name="Dodson R.J."/>
            <person name="Durkin A.S."/>
            <person name="Brinkac L.M."/>
            <person name="Daugherty S.C."/>
            <person name="Sullivan S.A."/>
            <person name="Rosovitz M.J."/>
            <person name="Gwinn M.L."/>
            <person name="Zhou L."/>
            <person name="Schneider D.J."/>
            <person name="Cartinhour S.W."/>
            <person name="Nelson W.C."/>
            <person name="Weidman J."/>
            <person name="Watkins K."/>
            <person name="Tran K."/>
            <person name="Khouri H."/>
            <person name="Pierson E.A."/>
            <person name="Pierson L.S. III"/>
            <person name="Thomashow L.S."/>
            <person name="Loper J.E."/>
        </authorList>
    </citation>
    <scope>NUCLEOTIDE SEQUENCE [LARGE SCALE GENOMIC DNA]</scope>
    <source>
        <strain>ATCC BAA-477 / NRRL B-23932 / Pf-5</strain>
    </source>
</reference>
<dbReference type="EC" id="2.4.2.52" evidence="1"/>
<dbReference type="EMBL" id="CP000076">
    <property type="protein sequence ID" value="AAY95009.1"/>
    <property type="molecule type" value="Genomic_DNA"/>
</dbReference>
<dbReference type="RefSeq" id="WP_011063993.1">
    <property type="nucleotide sequence ID" value="NC_004129.6"/>
</dbReference>
<dbReference type="STRING" id="220664.PFL_5819"/>
<dbReference type="KEGG" id="pfl:PFL_5819"/>
<dbReference type="PATRIC" id="fig|220664.5.peg.5933"/>
<dbReference type="eggNOG" id="COG1767">
    <property type="taxonomic scope" value="Bacteria"/>
</dbReference>
<dbReference type="HOGENOM" id="CLU_056179_0_0_6"/>
<dbReference type="Proteomes" id="UP000008540">
    <property type="component" value="Chromosome"/>
</dbReference>
<dbReference type="GO" id="GO:0005524">
    <property type="term" value="F:ATP binding"/>
    <property type="evidence" value="ECO:0007669"/>
    <property type="project" value="UniProtKB-KW"/>
</dbReference>
<dbReference type="GO" id="GO:0046917">
    <property type="term" value="F:triphosphoribosyl-dephospho-CoA synthase activity"/>
    <property type="evidence" value="ECO:0007669"/>
    <property type="project" value="UniProtKB-UniRule"/>
</dbReference>
<dbReference type="GO" id="GO:0051191">
    <property type="term" value="P:prosthetic group biosynthetic process"/>
    <property type="evidence" value="ECO:0007669"/>
    <property type="project" value="TreeGrafter"/>
</dbReference>
<dbReference type="Gene3D" id="1.10.4200.10">
    <property type="entry name" value="Triphosphoribosyl-dephospho-CoA protein"/>
    <property type="match status" value="2"/>
</dbReference>
<dbReference type="HAMAP" id="MF_01883">
    <property type="entry name" value="MdcB"/>
    <property type="match status" value="1"/>
</dbReference>
<dbReference type="InterPro" id="IPR002736">
    <property type="entry name" value="CitG"/>
</dbReference>
<dbReference type="InterPro" id="IPR017555">
    <property type="entry name" value="TriPribosyl-deP-CoA_syn"/>
</dbReference>
<dbReference type="NCBIfam" id="TIGR03132">
    <property type="entry name" value="malonate_mdcB"/>
    <property type="match status" value="1"/>
</dbReference>
<dbReference type="NCBIfam" id="NF002315">
    <property type="entry name" value="PRK01237.1"/>
    <property type="match status" value="1"/>
</dbReference>
<dbReference type="PANTHER" id="PTHR30201:SF2">
    <property type="entry name" value="2-(5''-TRIPHOSPHORIBOSYL)-3'-DEPHOSPHOCOENZYME-A SYNTHASE"/>
    <property type="match status" value="1"/>
</dbReference>
<dbReference type="PANTHER" id="PTHR30201">
    <property type="entry name" value="TRIPHOSPHORIBOSYL-DEPHOSPHO-COA SYNTHASE"/>
    <property type="match status" value="1"/>
</dbReference>
<dbReference type="Pfam" id="PF01874">
    <property type="entry name" value="CitG"/>
    <property type="match status" value="1"/>
</dbReference>
<accession>Q4K4F6</accession>
<sequence length="291" mass="30422">MHAFNLQSPTPSLAERLADLAVDALIDEADLSPKPALVDRRGNGAHTDLHLGLMHASALSLWPAFKEMADAALLLGQVGLPLREALGRIGREGEQAMLATTGGVNTHRGAIWALGLLVAAAALEPQATSAGSVALRAARLALLEDRYAPRPLSHGAQVALRYGVRGAREEAQQGFPAVLQLGLPQLKRSRAQGHGEQNARLDALLAIMSRLADTCVLYRAGELGLQAMQQGARAVLDAGGSATLAGRRRLHELDLQLLTLNASPGGAADLLAASLLLDRIESGDAVNQGAN</sequence>
<protein>
    <recommendedName>
        <fullName evidence="1">Probable 2-(5''-triphosphoribosyl)-3'-dephosphocoenzyme-A synthase</fullName>
        <shortName evidence="1">2-(5''-triphosphoribosyl)-3'-dephospho-CoA synthase</shortName>
        <ecNumber evidence="1">2.4.2.52</ecNumber>
    </recommendedName>
</protein>
<feature type="chain" id="PRO_0000255403" description="Probable 2-(5''-triphosphoribosyl)-3'-dephosphocoenzyme-A synthase">
    <location>
        <begin position="1"/>
        <end position="291"/>
    </location>
</feature>
<name>MDCB_PSEF5</name>
<comment type="function">
    <text evidence="1">Involved in the formation of 2-(5''-phosphoribosyl)-3'-dephosphocoenzyme-A, the prosthetic group of the acyl-carrier protein of the malonate decarboxylase.</text>
</comment>
<comment type="catalytic activity">
    <reaction evidence="1">
        <text>3'-dephospho-CoA + ATP = 2'-(5''-triphospho-alpha-D-ribosyl)-3'-dephospho-CoA + adenine</text>
        <dbReference type="Rhea" id="RHEA:15117"/>
        <dbReference type="ChEBI" id="CHEBI:16708"/>
        <dbReference type="ChEBI" id="CHEBI:30616"/>
        <dbReference type="ChEBI" id="CHEBI:57328"/>
        <dbReference type="ChEBI" id="CHEBI:61378"/>
        <dbReference type="EC" id="2.4.2.52"/>
    </reaction>
</comment>
<comment type="similarity">
    <text evidence="1">Belongs to the CitG/MdcB family.</text>
</comment>
<proteinExistence type="inferred from homology"/>
<gene>
    <name evidence="1" type="primary">mdcB</name>
    <name type="ordered locus">PFL_5819</name>
</gene>
<keyword id="KW-0067">ATP-binding</keyword>
<keyword id="KW-0547">Nucleotide-binding</keyword>
<keyword id="KW-0808">Transferase</keyword>
<evidence type="ECO:0000255" key="1">
    <source>
        <dbReference type="HAMAP-Rule" id="MF_01883"/>
    </source>
</evidence>